<organism>
    <name type="scientific">Candida glabrata (strain ATCC 2001 / BCRC 20586 / JCM 3761 / NBRC 0622 / NRRL Y-65 / CBS 138)</name>
    <name type="common">Yeast</name>
    <name type="synonym">Nakaseomyces glabratus</name>
    <dbReference type="NCBI Taxonomy" id="284593"/>
    <lineage>
        <taxon>Eukaryota</taxon>
        <taxon>Fungi</taxon>
        <taxon>Dikarya</taxon>
        <taxon>Ascomycota</taxon>
        <taxon>Saccharomycotina</taxon>
        <taxon>Saccharomycetes</taxon>
        <taxon>Saccharomycetales</taxon>
        <taxon>Saccharomycetaceae</taxon>
        <taxon>Nakaseomyces</taxon>
    </lineage>
</organism>
<keyword id="KW-0129">CBS domain</keyword>
<keyword id="KW-0963">Cytoplasm</keyword>
<keyword id="KW-0539">Nucleus</keyword>
<keyword id="KW-1185">Reference proteome</keyword>
<keyword id="KW-0677">Repeat</keyword>
<name>SDS23_CANGA</name>
<sequence>MTNPKNVVPNSGTSSRHASIVEMLSSPPLLPHQHAQHAHVHRSQGRSESIESIPLQRSASGTSSITSMGSNNDSSSANAQSANPSAGSATNVGASGTPHSGSGLEAGNTDLSAVPMLQTPSQCLNSAHIHTWKHIQLSQLIEQNKLIFVPGSLSVEETFNTLIKYHLTSIPVEAVPGDMNCLTFDYNDLNSYLLLVLNKITINNKQVTQDCQNGKPVAVGDIVKLTPKNPFYKLPETENLSTVMGILGSGVHRVAITNPEMTQIRGILSQRRLIKYIWDNARSFGTLEPLLNSSLQDLKIGVLNTNSKPTSRQSRVISIQGEEPLIMALYKMHKERISSIAVIDPQGNLIGNISVTDVKHVTRTSQYPLLHKTCRHFISVILNSRGLETGKDSFPIFHVYPTSSLARTLAKLVATKSHRLWIVQPQEAPTATSSSSTSSSVNTGTISPNPTPTTTSASPAPGATPNALNNHSPLLSTVDDGHTVINPATQATNTTVIQPNLFEKEYRTGKLIGVVSLTDIINLLARKQTANTEVDPQTARRQRGPATQ</sequence>
<reference key="1">
    <citation type="journal article" date="2004" name="Nature">
        <title>Genome evolution in yeasts.</title>
        <authorList>
            <person name="Dujon B."/>
            <person name="Sherman D."/>
            <person name="Fischer G."/>
            <person name="Durrens P."/>
            <person name="Casaregola S."/>
            <person name="Lafontaine I."/>
            <person name="de Montigny J."/>
            <person name="Marck C."/>
            <person name="Neuveglise C."/>
            <person name="Talla E."/>
            <person name="Goffard N."/>
            <person name="Frangeul L."/>
            <person name="Aigle M."/>
            <person name="Anthouard V."/>
            <person name="Babour A."/>
            <person name="Barbe V."/>
            <person name="Barnay S."/>
            <person name="Blanchin S."/>
            <person name="Beckerich J.-M."/>
            <person name="Beyne E."/>
            <person name="Bleykasten C."/>
            <person name="Boisrame A."/>
            <person name="Boyer J."/>
            <person name="Cattolico L."/>
            <person name="Confanioleri F."/>
            <person name="de Daruvar A."/>
            <person name="Despons L."/>
            <person name="Fabre E."/>
            <person name="Fairhead C."/>
            <person name="Ferry-Dumazet H."/>
            <person name="Groppi A."/>
            <person name="Hantraye F."/>
            <person name="Hennequin C."/>
            <person name="Jauniaux N."/>
            <person name="Joyet P."/>
            <person name="Kachouri R."/>
            <person name="Kerrest A."/>
            <person name="Koszul R."/>
            <person name="Lemaire M."/>
            <person name="Lesur I."/>
            <person name="Ma L."/>
            <person name="Muller H."/>
            <person name="Nicaud J.-M."/>
            <person name="Nikolski M."/>
            <person name="Oztas S."/>
            <person name="Ozier-Kalogeropoulos O."/>
            <person name="Pellenz S."/>
            <person name="Potier S."/>
            <person name="Richard G.-F."/>
            <person name="Straub M.-L."/>
            <person name="Suleau A."/>
            <person name="Swennen D."/>
            <person name="Tekaia F."/>
            <person name="Wesolowski-Louvel M."/>
            <person name="Westhof E."/>
            <person name="Wirth B."/>
            <person name="Zeniou-Meyer M."/>
            <person name="Zivanovic Y."/>
            <person name="Bolotin-Fukuhara M."/>
            <person name="Thierry A."/>
            <person name="Bouchier C."/>
            <person name="Caudron B."/>
            <person name="Scarpelli C."/>
            <person name="Gaillardin C."/>
            <person name="Weissenbach J."/>
            <person name="Wincker P."/>
            <person name="Souciet J.-L."/>
        </authorList>
    </citation>
    <scope>NUCLEOTIDE SEQUENCE [LARGE SCALE GENOMIC DNA]</scope>
    <source>
        <strain>ATCC 2001 / BCRC 20586 / JCM 3761 / NBRC 0622 / NRRL Y-65 / CBS 138</strain>
    </source>
</reference>
<accession>Q6FMN0</accession>
<gene>
    <name type="primary">SDS23</name>
    <name type="ordered locus">CAGL0K06699g</name>
</gene>
<feature type="chain" id="PRO_0000324950" description="Protein SDS23">
    <location>
        <begin position="1"/>
        <end position="548"/>
    </location>
</feature>
<feature type="domain" description="CBS 1" evidence="2">
    <location>
        <begin position="140"/>
        <end position="198"/>
    </location>
</feature>
<feature type="domain" description="CBS 2" evidence="2">
    <location>
        <begin position="225"/>
        <end position="283"/>
    </location>
</feature>
<feature type="domain" description="CBS 3" evidence="2">
    <location>
        <begin position="310"/>
        <end position="369"/>
    </location>
</feature>
<feature type="domain" description="CBS 4" evidence="2">
    <location>
        <begin position="454"/>
        <end position="533"/>
    </location>
</feature>
<feature type="region of interest" description="Disordered" evidence="3">
    <location>
        <begin position="31"/>
        <end position="109"/>
    </location>
</feature>
<feature type="region of interest" description="Disordered" evidence="3">
    <location>
        <begin position="426"/>
        <end position="471"/>
    </location>
</feature>
<feature type="region of interest" description="Disordered" evidence="3">
    <location>
        <begin position="529"/>
        <end position="548"/>
    </location>
</feature>
<feature type="compositionally biased region" description="Basic residues" evidence="3">
    <location>
        <begin position="34"/>
        <end position="44"/>
    </location>
</feature>
<feature type="compositionally biased region" description="Low complexity" evidence="3">
    <location>
        <begin position="63"/>
        <end position="89"/>
    </location>
</feature>
<feature type="compositionally biased region" description="Polar residues" evidence="3">
    <location>
        <begin position="90"/>
        <end position="100"/>
    </location>
</feature>
<feature type="compositionally biased region" description="Low complexity" evidence="3">
    <location>
        <begin position="430"/>
        <end position="467"/>
    </location>
</feature>
<evidence type="ECO:0000250" key="1"/>
<evidence type="ECO:0000255" key="2">
    <source>
        <dbReference type="PROSITE-ProRule" id="PRU00703"/>
    </source>
</evidence>
<evidence type="ECO:0000256" key="3">
    <source>
        <dbReference type="SAM" id="MobiDB-lite"/>
    </source>
</evidence>
<evidence type="ECO:0000305" key="4"/>
<comment type="function">
    <text evidence="1">Involved in DNA replication and cell separation.</text>
</comment>
<comment type="subcellular location">
    <subcellularLocation>
        <location evidence="1">Cytoplasm</location>
    </subcellularLocation>
    <subcellularLocation>
        <location evidence="1">Nucleus</location>
    </subcellularLocation>
</comment>
<comment type="similarity">
    <text evidence="4">Belongs to the SDS23 family.</text>
</comment>
<protein>
    <recommendedName>
        <fullName>Protein SDS23</fullName>
    </recommendedName>
</protein>
<proteinExistence type="inferred from homology"/>
<dbReference type="EMBL" id="CR380957">
    <property type="protein sequence ID" value="CAG61475.1"/>
    <property type="molecule type" value="Genomic_DNA"/>
</dbReference>
<dbReference type="RefSeq" id="XP_448514.1">
    <property type="nucleotide sequence ID" value="XM_448514.1"/>
</dbReference>
<dbReference type="SMR" id="Q6FMN0"/>
<dbReference type="FunCoup" id="Q6FMN0">
    <property type="interactions" value="231"/>
</dbReference>
<dbReference type="STRING" id="284593.Q6FMN0"/>
<dbReference type="EnsemblFungi" id="CAGL0K06699g-T">
    <property type="protein sequence ID" value="CAGL0K06699g-T-p1"/>
    <property type="gene ID" value="CAGL0K06699g"/>
</dbReference>
<dbReference type="KEGG" id="cgr:2890447"/>
<dbReference type="CGD" id="CAL0134733">
    <property type="gene designation" value="CAGL0K06699g"/>
</dbReference>
<dbReference type="VEuPathDB" id="FungiDB:B1J91_K06699g"/>
<dbReference type="VEuPathDB" id="FungiDB:CAGL0K06699g"/>
<dbReference type="eggNOG" id="KOG1764">
    <property type="taxonomic scope" value="Eukaryota"/>
</dbReference>
<dbReference type="HOGENOM" id="CLU_024459_1_1_1"/>
<dbReference type="InParanoid" id="Q6FMN0"/>
<dbReference type="OMA" id="AITNPEM"/>
<dbReference type="Proteomes" id="UP000002428">
    <property type="component" value="Chromosome K"/>
</dbReference>
<dbReference type="GO" id="GO:0005737">
    <property type="term" value="C:cytoplasm"/>
    <property type="evidence" value="ECO:0007669"/>
    <property type="project" value="UniProtKB-SubCell"/>
</dbReference>
<dbReference type="GO" id="GO:0005634">
    <property type="term" value="C:nucleus"/>
    <property type="evidence" value="ECO:0007669"/>
    <property type="project" value="UniProtKB-SubCell"/>
</dbReference>
<dbReference type="GO" id="GO:0004865">
    <property type="term" value="F:protein serine/threonine phosphatase inhibitor activity"/>
    <property type="evidence" value="ECO:0007669"/>
    <property type="project" value="TreeGrafter"/>
</dbReference>
<dbReference type="GO" id="GO:0042149">
    <property type="term" value="P:cellular response to glucose starvation"/>
    <property type="evidence" value="ECO:0007669"/>
    <property type="project" value="InterPro"/>
</dbReference>
<dbReference type="GO" id="GO:0006897">
    <property type="term" value="P:endocytosis"/>
    <property type="evidence" value="ECO:0007669"/>
    <property type="project" value="EnsemblFungi"/>
</dbReference>
<dbReference type="GO" id="GO:0030071">
    <property type="term" value="P:regulation of mitotic metaphase/anaphase transition"/>
    <property type="evidence" value="ECO:0007669"/>
    <property type="project" value="InterPro"/>
</dbReference>
<dbReference type="GO" id="GO:0000920">
    <property type="term" value="P:septum digestion after cytokinesis"/>
    <property type="evidence" value="ECO:0007669"/>
    <property type="project" value="EnsemblFungi"/>
</dbReference>
<dbReference type="FunFam" id="3.10.580.10:FF:000035">
    <property type="entry name" value="Protein SDS23"/>
    <property type="match status" value="1"/>
</dbReference>
<dbReference type="FunFam" id="3.10.580.10:FF:000043">
    <property type="entry name" value="Sds23p"/>
    <property type="match status" value="1"/>
</dbReference>
<dbReference type="Gene3D" id="3.10.580.10">
    <property type="entry name" value="CBS-domain"/>
    <property type="match status" value="2"/>
</dbReference>
<dbReference type="InterPro" id="IPR050511">
    <property type="entry name" value="AMPK_gamma/SDS23_families"/>
</dbReference>
<dbReference type="InterPro" id="IPR000644">
    <property type="entry name" value="CBS_dom"/>
</dbReference>
<dbReference type="InterPro" id="IPR046342">
    <property type="entry name" value="CBS_dom_sf"/>
</dbReference>
<dbReference type="InterPro" id="IPR016711">
    <property type="entry name" value="Ssd23"/>
</dbReference>
<dbReference type="PANTHER" id="PTHR13780">
    <property type="entry name" value="AMP-ACTIVATED PROTEIN KINASE, GAMMA REGULATORY SUBUNIT"/>
    <property type="match status" value="1"/>
</dbReference>
<dbReference type="PANTHER" id="PTHR13780:SF36">
    <property type="entry name" value="CBS DOMAIN-CONTAINING PROTEIN"/>
    <property type="match status" value="1"/>
</dbReference>
<dbReference type="Pfam" id="PF00571">
    <property type="entry name" value="CBS"/>
    <property type="match status" value="1"/>
</dbReference>
<dbReference type="PIRSF" id="PIRSF018148">
    <property type="entry name" value="UCP018148_CBS_YBR214w"/>
    <property type="match status" value="1"/>
</dbReference>
<dbReference type="SMART" id="SM00116">
    <property type="entry name" value="CBS"/>
    <property type="match status" value="2"/>
</dbReference>
<dbReference type="SUPFAM" id="SSF54631">
    <property type="entry name" value="CBS-domain pair"/>
    <property type="match status" value="2"/>
</dbReference>
<dbReference type="PROSITE" id="PS51371">
    <property type="entry name" value="CBS"/>
    <property type="match status" value="3"/>
</dbReference>